<comment type="similarity">
    <text evidence="1">Belongs to the UPF0225 family.</text>
</comment>
<gene>
    <name type="ordered locus">PSEEN1229</name>
</gene>
<protein>
    <recommendedName>
        <fullName evidence="1">UPF0225 protein PSEEN1229</fullName>
    </recommendedName>
</protein>
<feature type="chain" id="PRO_1000061299" description="UPF0225 protein PSEEN1229">
    <location>
        <begin position="1"/>
        <end position="158"/>
    </location>
</feature>
<dbReference type="EMBL" id="CT573326">
    <property type="protein sequence ID" value="CAK14124.1"/>
    <property type="molecule type" value="Genomic_DNA"/>
</dbReference>
<dbReference type="RefSeq" id="WP_011532540.1">
    <property type="nucleotide sequence ID" value="NC_008027.1"/>
</dbReference>
<dbReference type="SMR" id="Q1IDY5"/>
<dbReference type="STRING" id="384676.PSEEN1229"/>
<dbReference type="GeneID" id="32804508"/>
<dbReference type="KEGG" id="pen:PSEEN1229"/>
<dbReference type="eggNOG" id="COG3012">
    <property type="taxonomic scope" value="Bacteria"/>
</dbReference>
<dbReference type="HOGENOM" id="CLU_099590_0_1_6"/>
<dbReference type="OrthoDB" id="21421at2"/>
<dbReference type="Proteomes" id="UP000000658">
    <property type="component" value="Chromosome"/>
</dbReference>
<dbReference type="Gene3D" id="3.10.450.50">
    <property type="match status" value="1"/>
</dbReference>
<dbReference type="HAMAP" id="MF_00612">
    <property type="entry name" value="UPF0225"/>
    <property type="match status" value="1"/>
</dbReference>
<dbReference type="InterPro" id="IPR032710">
    <property type="entry name" value="NTF2-like_dom_sf"/>
</dbReference>
<dbReference type="InterPro" id="IPR004027">
    <property type="entry name" value="SEC_C_motif"/>
</dbReference>
<dbReference type="InterPro" id="IPR023006">
    <property type="entry name" value="UPF0225"/>
</dbReference>
<dbReference type="InterPro" id="IPR048469">
    <property type="entry name" value="YchJ-like_M"/>
</dbReference>
<dbReference type="NCBIfam" id="NF001213">
    <property type="entry name" value="PRK00183.1"/>
    <property type="match status" value="1"/>
</dbReference>
<dbReference type="NCBIfam" id="NF002449">
    <property type="entry name" value="PRK01617.1"/>
    <property type="match status" value="1"/>
</dbReference>
<dbReference type="NCBIfam" id="NF002486">
    <property type="entry name" value="PRK01752.1"/>
    <property type="match status" value="1"/>
</dbReference>
<dbReference type="PANTHER" id="PTHR33747:SF1">
    <property type="entry name" value="ADENYLATE CYCLASE-ASSOCIATED CAP C-TERMINAL DOMAIN-CONTAINING PROTEIN"/>
    <property type="match status" value="1"/>
</dbReference>
<dbReference type="PANTHER" id="PTHR33747">
    <property type="entry name" value="UPF0225 PROTEIN SCO1677"/>
    <property type="match status" value="1"/>
</dbReference>
<dbReference type="Pfam" id="PF02810">
    <property type="entry name" value="SEC-C"/>
    <property type="match status" value="1"/>
</dbReference>
<dbReference type="Pfam" id="PF17775">
    <property type="entry name" value="YchJ_M-like"/>
    <property type="match status" value="1"/>
</dbReference>
<dbReference type="SUPFAM" id="SSF54427">
    <property type="entry name" value="NTF2-like"/>
    <property type="match status" value="1"/>
</dbReference>
<dbReference type="SUPFAM" id="SSF103642">
    <property type="entry name" value="Sec-C motif"/>
    <property type="match status" value="1"/>
</dbReference>
<name>Y1229_PSEE4</name>
<proteinExistence type="inferred from homology"/>
<sequence length="158" mass="17067">MSVSVCPCGTGNLLDACCGHYHAGTPAPDAQSLMRSRYSAYVLGLVDYLVGTTLPAQQPGLDRAGMAAWSAQSTWLGLEVESAEVFGGQPEHAFVTFTARWHDTDGDHQHRERSAFVQHAGRWYFIDPTVPLNAGRNDPCPCASGQKFKKCCASYLGS</sequence>
<evidence type="ECO:0000255" key="1">
    <source>
        <dbReference type="HAMAP-Rule" id="MF_00612"/>
    </source>
</evidence>
<reference key="1">
    <citation type="journal article" date="2006" name="Nat. Biotechnol.">
        <title>Complete genome sequence of the entomopathogenic and metabolically versatile soil bacterium Pseudomonas entomophila.</title>
        <authorList>
            <person name="Vodovar N."/>
            <person name="Vallenet D."/>
            <person name="Cruveiller S."/>
            <person name="Rouy Z."/>
            <person name="Barbe V."/>
            <person name="Acosta C."/>
            <person name="Cattolico L."/>
            <person name="Jubin C."/>
            <person name="Lajus A."/>
            <person name="Segurens B."/>
            <person name="Vacherie B."/>
            <person name="Wincker P."/>
            <person name="Weissenbach J."/>
            <person name="Lemaitre B."/>
            <person name="Medigue C."/>
            <person name="Boccard F."/>
        </authorList>
    </citation>
    <scope>NUCLEOTIDE SEQUENCE [LARGE SCALE GENOMIC DNA]</scope>
    <source>
        <strain>L48</strain>
    </source>
</reference>
<accession>Q1IDY5</accession>
<organism>
    <name type="scientific">Pseudomonas entomophila (strain L48)</name>
    <dbReference type="NCBI Taxonomy" id="384676"/>
    <lineage>
        <taxon>Bacteria</taxon>
        <taxon>Pseudomonadati</taxon>
        <taxon>Pseudomonadota</taxon>
        <taxon>Gammaproteobacteria</taxon>
        <taxon>Pseudomonadales</taxon>
        <taxon>Pseudomonadaceae</taxon>
        <taxon>Pseudomonas</taxon>
    </lineage>
</organism>